<keyword id="KW-0880">Kelch repeat</keyword>
<keyword id="KW-1185">Reference proteome</keyword>
<keyword id="KW-0677">Repeat</keyword>
<gene>
    <name evidence="3" type="ordered locus">At5g02995</name>
    <name evidence="4" type="ORF">F15A17_20</name>
</gene>
<evidence type="ECO:0000255" key="1"/>
<evidence type="ECO:0000255" key="2">
    <source>
        <dbReference type="PROSITE-ProRule" id="PRU00080"/>
    </source>
</evidence>
<evidence type="ECO:0000305" key="3"/>
<evidence type="ECO:0000312" key="4">
    <source>
        <dbReference type="EMBL" id="CAB86066.1"/>
    </source>
</evidence>
<dbReference type="EMBL" id="AL163002">
    <property type="protein sequence ID" value="CAB86066.1"/>
    <property type="status" value="ALT_SEQ"/>
    <property type="molecule type" value="Genomic_DNA"/>
</dbReference>
<dbReference type="EMBL" id="CP002688">
    <property type="protein sequence ID" value="ANM70971.1"/>
    <property type="status" value="ALT_SEQ"/>
    <property type="molecule type" value="Genomic_DNA"/>
</dbReference>
<dbReference type="PIR" id="T48320">
    <property type="entry name" value="T48320"/>
</dbReference>
<dbReference type="RefSeq" id="NP_001332537.1">
    <property type="nucleotide sequence ID" value="NM_001342683.1"/>
</dbReference>
<dbReference type="SMR" id="Q9LYY6"/>
<dbReference type="STRING" id="3702.Q9LYY6"/>
<dbReference type="PaxDb" id="3702-AT5G02990.1"/>
<dbReference type="GeneID" id="28720518"/>
<dbReference type="KEGG" id="ath:AT5G02995"/>
<dbReference type="Araport" id="AT5G02995"/>
<dbReference type="TAIR" id="AT5G02995"/>
<dbReference type="eggNOG" id="KOG1072">
    <property type="taxonomic scope" value="Eukaryota"/>
</dbReference>
<dbReference type="HOGENOM" id="CLU_032521_1_2_1"/>
<dbReference type="InParanoid" id="Q9LYY6"/>
<dbReference type="PRO" id="PR:Q9LYY6"/>
<dbReference type="Proteomes" id="UP000006548">
    <property type="component" value="Chromosome 5"/>
</dbReference>
<dbReference type="ExpressionAtlas" id="Q9LYY6">
    <property type="expression patterns" value="baseline and differential"/>
</dbReference>
<dbReference type="CDD" id="cd22152">
    <property type="entry name" value="F-box_AtAFR-like"/>
    <property type="match status" value="1"/>
</dbReference>
<dbReference type="Gene3D" id="2.120.10.80">
    <property type="entry name" value="Kelch-type beta propeller"/>
    <property type="match status" value="1"/>
</dbReference>
<dbReference type="InterPro" id="IPR050354">
    <property type="entry name" value="F-box/kelch-repeat_ARATH"/>
</dbReference>
<dbReference type="InterPro" id="IPR001810">
    <property type="entry name" value="F-box_dom"/>
</dbReference>
<dbReference type="InterPro" id="IPR015915">
    <property type="entry name" value="Kelch-typ_b-propeller"/>
</dbReference>
<dbReference type="InterPro" id="IPR006652">
    <property type="entry name" value="Kelch_1"/>
</dbReference>
<dbReference type="PANTHER" id="PTHR24414:SF127">
    <property type="entry name" value="F-BOX ASSOCIATED DOMAIN-CONTAINING PROTEIN"/>
    <property type="match status" value="1"/>
</dbReference>
<dbReference type="PANTHER" id="PTHR24414">
    <property type="entry name" value="F-BOX/KELCH-REPEAT PROTEIN SKIP4"/>
    <property type="match status" value="1"/>
</dbReference>
<dbReference type="Pfam" id="PF00646">
    <property type="entry name" value="F-box"/>
    <property type="match status" value="1"/>
</dbReference>
<dbReference type="Pfam" id="PF25210">
    <property type="entry name" value="Kelch_FKB95"/>
    <property type="match status" value="1"/>
</dbReference>
<dbReference type="SMART" id="SM00612">
    <property type="entry name" value="Kelch"/>
    <property type="match status" value="2"/>
</dbReference>
<dbReference type="SUPFAM" id="SSF117281">
    <property type="entry name" value="Kelch motif"/>
    <property type="match status" value="1"/>
</dbReference>
<feature type="chain" id="PRO_0000283264" description="Putative F-box/kelch-repeat protein At5g02995">
    <location>
        <begin position="1"/>
        <end position="368"/>
    </location>
</feature>
<feature type="domain" description="F-box" evidence="2">
    <location>
        <begin position="35"/>
        <end position="84"/>
    </location>
</feature>
<feature type="repeat" description="Kelch 1" evidence="1">
    <location>
        <begin position="140"/>
        <end position="186"/>
    </location>
</feature>
<feature type="repeat" description="Kelch 2" evidence="1">
    <location>
        <begin position="187"/>
        <end position="233"/>
    </location>
</feature>
<protein>
    <recommendedName>
        <fullName evidence="3">Putative F-box/kelch-repeat protein At5g02995</fullName>
    </recommendedName>
</protein>
<proteinExistence type="predicted"/>
<comment type="sequence caution" evidence="3">
    <conflict type="erroneous gene model prediction">
        <sequence resource="EMBL-CDS" id="ANM70971"/>
    </conflict>
</comment>
<comment type="sequence caution" evidence="3">
    <conflict type="erroneous gene model prediction">
        <sequence resource="EMBL-CDS" id="CAB86066"/>
    </conflict>
</comment>
<accession>Q9LYY6</accession>
<accession>A0A1P8BH96</accession>
<accession>F4KDV8</accession>
<organism>
    <name type="scientific">Arabidopsis thaliana</name>
    <name type="common">Mouse-ear cress</name>
    <dbReference type="NCBI Taxonomy" id="3702"/>
    <lineage>
        <taxon>Eukaryota</taxon>
        <taxon>Viridiplantae</taxon>
        <taxon>Streptophyta</taxon>
        <taxon>Embryophyta</taxon>
        <taxon>Tracheophyta</taxon>
        <taxon>Spermatophyta</taxon>
        <taxon>Magnoliopsida</taxon>
        <taxon>eudicotyledons</taxon>
        <taxon>Gunneridae</taxon>
        <taxon>Pentapetalae</taxon>
        <taxon>rosids</taxon>
        <taxon>malvids</taxon>
        <taxon>Brassicales</taxon>
        <taxon>Brassicaceae</taxon>
        <taxon>Camelineae</taxon>
        <taxon>Arabidopsis</taxon>
    </lineage>
</organism>
<name>FK108_ARATH</name>
<reference key="1">
    <citation type="journal article" date="2000" name="Nature">
        <title>Sequence and analysis of chromosome 5 of the plant Arabidopsis thaliana.</title>
        <authorList>
            <person name="Tabata S."/>
            <person name="Kaneko T."/>
            <person name="Nakamura Y."/>
            <person name="Kotani H."/>
            <person name="Kato T."/>
            <person name="Asamizu E."/>
            <person name="Miyajima N."/>
            <person name="Sasamoto S."/>
            <person name="Kimura T."/>
            <person name="Hosouchi T."/>
            <person name="Kawashima K."/>
            <person name="Kohara M."/>
            <person name="Matsumoto M."/>
            <person name="Matsuno A."/>
            <person name="Muraki A."/>
            <person name="Nakayama S."/>
            <person name="Nakazaki N."/>
            <person name="Naruo K."/>
            <person name="Okumura S."/>
            <person name="Shinpo S."/>
            <person name="Takeuchi C."/>
            <person name="Wada T."/>
            <person name="Watanabe A."/>
            <person name="Yamada M."/>
            <person name="Yasuda M."/>
            <person name="Sato S."/>
            <person name="de la Bastide M."/>
            <person name="Huang E."/>
            <person name="Spiegel L."/>
            <person name="Gnoj L."/>
            <person name="O'Shaughnessy A."/>
            <person name="Preston R."/>
            <person name="Habermann K."/>
            <person name="Murray J."/>
            <person name="Johnson D."/>
            <person name="Rohlfing T."/>
            <person name="Nelson J."/>
            <person name="Stoneking T."/>
            <person name="Pepin K."/>
            <person name="Spieth J."/>
            <person name="Sekhon M."/>
            <person name="Armstrong J."/>
            <person name="Becker M."/>
            <person name="Belter E."/>
            <person name="Cordum H."/>
            <person name="Cordes M."/>
            <person name="Courtney L."/>
            <person name="Courtney W."/>
            <person name="Dante M."/>
            <person name="Du H."/>
            <person name="Edwards J."/>
            <person name="Fryman J."/>
            <person name="Haakensen B."/>
            <person name="Lamar E."/>
            <person name="Latreille P."/>
            <person name="Leonard S."/>
            <person name="Meyer R."/>
            <person name="Mulvaney E."/>
            <person name="Ozersky P."/>
            <person name="Riley A."/>
            <person name="Strowmatt C."/>
            <person name="Wagner-McPherson C."/>
            <person name="Wollam A."/>
            <person name="Yoakum M."/>
            <person name="Bell M."/>
            <person name="Dedhia N."/>
            <person name="Parnell L."/>
            <person name="Shah R."/>
            <person name="Rodriguez M."/>
            <person name="Hoon See L."/>
            <person name="Vil D."/>
            <person name="Baker J."/>
            <person name="Kirchoff K."/>
            <person name="Toth K."/>
            <person name="King L."/>
            <person name="Bahret A."/>
            <person name="Miller B."/>
            <person name="Marra M.A."/>
            <person name="Martienssen R."/>
            <person name="McCombie W.R."/>
            <person name="Wilson R.K."/>
            <person name="Murphy G."/>
            <person name="Bancroft I."/>
            <person name="Volckaert G."/>
            <person name="Wambutt R."/>
            <person name="Duesterhoeft A."/>
            <person name="Stiekema W."/>
            <person name="Pohl T."/>
            <person name="Entian K.-D."/>
            <person name="Terryn N."/>
            <person name="Hartley N."/>
            <person name="Bent E."/>
            <person name="Johnson S."/>
            <person name="Langham S.-A."/>
            <person name="McCullagh B."/>
            <person name="Robben J."/>
            <person name="Grymonprez B."/>
            <person name="Zimmermann W."/>
            <person name="Ramsperger U."/>
            <person name="Wedler H."/>
            <person name="Balke K."/>
            <person name="Wedler E."/>
            <person name="Peters S."/>
            <person name="van Staveren M."/>
            <person name="Dirkse W."/>
            <person name="Mooijman P."/>
            <person name="Klein Lankhorst R."/>
            <person name="Weitzenegger T."/>
            <person name="Bothe G."/>
            <person name="Rose M."/>
            <person name="Hauf J."/>
            <person name="Berneiser S."/>
            <person name="Hempel S."/>
            <person name="Feldpausch M."/>
            <person name="Lamberth S."/>
            <person name="Villarroel R."/>
            <person name="Gielen J."/>
            <person name="Ardiles W."/>
            <person name="Bents O."/>
            <person name="Lemcke K."/>
            <person name="Kolesov G."/>
            <person name="Mayer K.F.X."/>
            <person name="Rudd S."/>
            <person name="Schoof H."/>
            <person name="Schueller C."/>
            <person name="Zaccaria P."/>
            <person name="Mewes H.-W."/>
            <person name="Bevan M."/>
            <person name="Fransz P.F."/>
        </authorList>
    </citation>
    <scope>NUCLEOTIDE SEQUENCE [LARGE SCALE GENOMIC DNA]</scope>
    <source>
        <strain>cv. Columbia</strain>
    </source>
</reference>
<reference key="2">
    <citation type="journal article" date="2017" name="Plant J.">
        <title>Araport11: a complete reannotation of the Arabidopsis thaliana reference genome.</title>
        <authorList>
            <person name="Cheng C.Y."/>
            <person name="Krishnakumar V."/>
            <person name="Chan A.P."/>
            <person name="Thibaud-Nissen F."/>
            <person name="Schobel S."/>
            <person name="Town C.D."/>
        </authorList>
    </citation>
    <scope>GENOME REANNOTATION</scope>
    <source>
        <strain>cv. Columbia</strain>
    </source>
</reference>
<sequence>MGGKVYAMDGLKIELKTNICLVEKCLRLVSYSNHSLYWNDPTEDCVWNCLARISRFHYPTLSLVSKGFRSLIASPELEATRSFIGETENHLCVCLNLNKNNNYNPRWFTLSPIAKQKLKSIPWHRHQYPKSSTVVANGSDIYIVGGFVCGTSSKRVFVFDSRSHQWRRLHDMRLPRVSAVVNIVDKKIYVIGGYKPRNIKDCGEVYDPNTQTWEPLLPTTVNLTIQNCVVSGGLVMGGKRYTTNGTKMNTCFVELENLLLGLSETYRDLVWRELKEDVWRVVRGLEQLSHNQNFTYVGNSGGGRRVAIWWKSMVVFRPRGRSHSTKKCKTEIWCAEISVERRGLGELWGRFSFSFRDSFIYIFLWEFF</sequence>